<keyword id="KW-0150">Chloroplast</keyword>
<keyword id="KW-0934">Plastid</keyword>
<keyword id="KW-0687">Ribonucleoprotein</keyword>
<keyword id="KW-0689">Ribosomal protein</keyword>
<keyword id="KW-0694">RNA-binding</keyword>
<keyword id="KW-0699">rRNA-binding</keyword>
<accession>A6MM15</accession>
<geneLocation type="chloroplast"/>
<feature type="chain" id="PRO_0000297712" description="Small ribosomal subunit protein uS12cz/uS12cy">
    <location>
        <begin position="1"/>
        <end position="123"/>
    </location>
</feature>
<gene>
    <name type="primary">rps12-A</name>
</gene>
<gene>
    <name type="primary">rps12-B</name>
</gene>
<evidence type="ECO:0000250" key="1"/>
<evidence type="ECO:0000255" key="2">
    <source>
        <dbReference type="HAMAP-Rule" id="MF_00403"/>
    </source>
</evidence>
<evidence type="ECO:0000305" key="3"/>
<sequence>MPTIKQLIRNTRQPIRNVTKSPALRGCPQRRGTCTRVYTITPKKPNSALRKVARVRLTSGFEITAYIPGIGHNSQEHSVVLVRGGRVKDLPGVRYHIVRGTLDAVGVKDRQQGRSKYGVKKPK</sequence>
<organism>
    <name type="scientific">Buxus microphylla</name>
    <name type="common">Littleleaf boxwood</name>
    <name type="synonym">Japanese boxwood</name>
    <dbReference type="NCBI Taxonomy" id="153571"/>
    <lineage>
        <taxon>Eukaryota</taxon>
        <taxon>Viridiplantae</taxon>
        <taxon>Streptophyta</taxon>
        <taxon>Embryophyta</taxon>
        <taxon>Tracheophyta</taxon>
        <taxon>Spermatophyta</taxon>
        <taxon>Magnoliopsida</taxon>
        <taxon>Buxales</taxon>
        <taxon>Buxaceae</taxon>
        <taxon>Buxus</taxon>
    </lineage>
</organism>
<name>RR12_BUXMI</name>
<protein>
    <recommendedName>
        <fullName evidence="2">Small ribosomal subunit protein uS12cz/uS12cy</fullName>
    </recommendedName>
    <alternativeName>
        <fullName evidence="3">30S ribosomal protein S12, chloroplastic</fullName>
    </alternativeName>
</protein>
<dbReference type="EMBL" id="EF380351">
    <property type="protein sequence ID" value="ABQ45295.1"/>
    <property type="molecule type" value="Genomic_DNA"/>
</dbReference>
<dbReference type="EMBL" id="EF380351">
    <property type="protein sequence ID" value="ABQ45309.1"/>
    <property type="molecule type" value="Genomic_DNA"/>
</dbReference>
<dbReference type="SMR" id="A6MM15"/>
<dbReference type="GO" id="GO:0009507">
    <property type="term" value="C:chloroplast"/>
    <property type="evidence" value="ECO:0007669"/>
    <property type="project" value="UniProtKB-SubCell"/>
</dbReference>
<dbReference type="GO" id="GO:0015935">
    <property type="term" value="C:small ribosomal subunit"/>
    <property type="evidence" value="ECO:0007669"/>
    <property type="project" value="InterPro"/>
</dbReference>
<dbReference type="GO" id="GO:0019843">
    <property type="term" value="F:rRNA binding"/>
    <property type="evidence" value="ECO:0007669"/>
    <property type="project" value="UniProtKB-UniRule"/>
</dbReference>
<dbReference type="GO" id="GO:0003735">
    <property type="term" value="F:structural constituent of ribosome"/>
    <property type="evidence" value="ECO:0007669"/>
    <property type="project" value="InterPro"/>
</dbReference>
<dbReference type="GO" id="GO:0006412">
    <property type="term" value="P:translation"/>
    <property type="evidence" value="ECO:0007669"/>
    <property type="project" value="UniProtKB-UniRule"/>
</dbReference>
<dbReference type="CDD" id="cd03368">
    <property type="entry name" value="Ribosomal_S12"/>
    <property type="match status" value="1"/>
</dbReference>
<dbReference type="FunFam" id="2.40.50.140:FF:000008">
    <property type="entry name" value="30S ribosomal protein S12, chloroplastic"/>
    <property type="match status" value="1"/>
</dbReference>
<dbReference type="Gene3D" id="2.40.50.140">
    <property type="entry name" value="Nucleic acid-binding proteins"/>
    <property type="match status" value="1"/>
</dbReference>
<dbReference type="HAMAP" id="MF_00403_B">
    <property type="entry name" value="Ribosomal_uS12_B"/>
    <property type="match status" value="1"/>
</dbReference>
<dbReference type="InterPro" id="IPR012340">
    <property type="entry name" value="NA-bd_OB-fold"/>
</dbReference>
<dbReference type="InterPro" id="IPR006032">
    <property type="entry name" value="Ribosomal_uS12"/>
</dbReference>
<dbReference type="InterPro" id="IPR005679">
    <property type="entry name" value="Ribosomal_uS12_bac"/>
</dbReference>
<dbReference type="NCBIfam" id="TIGR00981">
    <property type="entry name" value="rpsL_bact"/>
    <property type="match status" value="1"/>
</dbReference>
<dbReference type="PANTHER" id="PTHR11652">
    <property type="entry name" value="30S RIBOSOMAL PROTEIN S12 FAMILY MEMBER"/>
    <property type="match status" value="1"/>
</dbReference>
<dbReference type="Pfam" id="PF00164">
    <property type="entry name" value="Ribosom_S12_S23"/>
    <property type="match status" value="1"/>
</dbReference>
<dbReference type="PIRSF" id="PIRSF002133">
    <property type="entry name" value="Ribosomal_S12/S23"/>
    <property type="match status" value="1"/>
</dbReference>
<dbReference type="PRINTS" id="PR01034">
    <property type="entry name" value="RIBOSOMALS12"/>
</dbReference>
<dbReference type="SUPFAM" id="SSF50249">
    <property type="entry name" value="Nucleic acid-binding proteins"/>
    <property type="match status" value="1"/>
</dbReference>
<dbReference type="PROSITE" id="PS00055">
    <property type="entry name" value="RIBOSOMAL_S12"/>
    <property type="match status" value="1"/>
</dbReference>
<reference key="1">
    <citation type="journal article" date="2007" name="Mol. Phylogenet. Evol.">
        <title>Phylogenetic and evolutionary implications of complete chloroplast genome sequences of four early-diverging angiosperms: Buxus (Buxaceae), Chloranthus (Chloranthaceae), Dioscorea (Dioscoreaceae), and Illicium (Schisandraceae).</title>
        <authorList>
            <person name="Hansen D.R."/>
            <person name="Dastidar S.G."/>
            <person name="Cai Z."/>
            <person name="Penaflor C."/>
            <person name="Kuehl J.V."/>
            <person name="Boore J.L."/>
            <person name="Jansen R.K."/>
        </authorList>
    </citation>
    <scope>NUCLEOTIDE SEQUENCE [LARGE SCALE GENOMIC DNA]</scope>
</reference>
<proteinExistence type="inferred from homology"/>
<comment type="function">
    <text evidence="1">With S4 and S5 plays an important role in translational accuracy. Located at the interface of the 30S and 50S subunits (By similarity).</text>
</comment>
<comment type="subunit">
    <text evidence="1">Part of the 30S ribosomal subunit.</text>
</comment>
<comment type="subcellular location">
    <subcellularLocation>
        <location>Plastid</location>
        <location>Chloroplast</location>
    </subcellularLocation>
</comment>
<comment type="similarity">
    <text evidence="3">Belongs to the universal ribosomal protein uS12 family.</text>
</comment>